<comment type="function">
    <text evidence="1">Endoribonuclease that initiates mRNA decay.</text>
</comment>
<comment type="subcellular location">
    <subcellularLocation>
        <location evidence="1">Cell membrane</location>
        <topology evidence="1">Single-pass membrane protein</topology>
    </subcellularLocation>
</comment>
<comment type="similarity">
    <text evidence="1">Belongs to the RNase Y family.</text>
</comment>
<keyword id="KW-1003">Cell membrane</keyword>
<keyword id="KW-0255">Endonuclease</keyword>
<keyword id="KW-0378">Hydrolase</keyword>
<keyword id="KW-0472">Membrane</keyword>
<keyword id="KW-0540">Nuclease</keyword>
<keyword id="KW-1185">Reference proteome</keyword>
<keyword id="KW-0694">RNA-binding</keyword>
<keyword id="KW-0812">Transmembrane</keyword>
<keyword id="KW-1133">Transmembrane helix</keyword>
<feature type="chain" id="PRO_0000163804" description="Ribonuclease Y">
    <location>
        <begin position="1"/>
        <end position="523"/>
    </location>
</feature>
<feature type="transmembrane region" description="Helical" evidence="1">
    <location>
        <begin position="14"/>
        <end position="34"/>
    </location>
</feature>
<feature type="domain" description="KH" evidence="1">
    <location>
        <begin position="213"/>
        <end position="276"/>
    </location>
</feature>
<feature type="domain" description="HD" evidence="2">
    <location>
        <begin position="339"/>
        <end position="432"/>
    </location>
</feature>
<proteinExistence type="inferred from homology"/>
<name>RNY_CALS4</name>
<evidence type="ECO:0000255" key="1">
    <source>
        <dbReference type="HAMAP-Rule" id="MF_00335"/>
    </source>
</evidence>
<evidence type="ECO:0000255" key="2">
    <source>
        <dbReference type="PROSITE-ProRule" id="PRU01175"/>
    </source>
</evidence>
<dbReference type="EC" id="3.1.-.-" evidence="1"/>
<dbReference type="EMBL" id="AE008691">
    <property type="protein sequence ID" value="AAM24594.1"/>
    <property type="molecule type" value="Genomic_DNA"/>
</dbReference>
<dbReference type="SMR" id="Q8RA57"/>
<dbReference type="STRING" id="273068.TTE1372"/>
<dbReference type="KEGG" id="tte:TTE1372"/>
<dbReference type="eggNOG" id="COG1418">
    <property type="taxonomic scope" value="Bacteria"/>
</dbReference>
<dbReference type="HOGENOM" id="CLU_028328_1_0_9"/>
<dbReference type="Proteomes" id="UP000000555">
    <property type="component" value="Chromosome"/>
</dbReference>
<dbReference type="GO" id="GO:0005886">
    <property type="term" value="C:plasma membrane"/>
    <property type="evidence" value="ECO:0007669"/>
    <property type="project" value="UniProtKB-SubCell"/>
</dbReference>
<dbReference type="GO" id="GO:0003723">
    <property type="term" value="F:RNA binding"/>
    <property type="evidence" value="ECO:0007669"/>
    <property type="project" value="UniProtKB-UniRule"/>
</dbReference>
<dbReference type="GO" id="GO:0004521">
    <property type="term" value="F:RNA endonuclease activity"/>
    <property type="evidence" value="ECO:0007669"/>
    <property type="project" value="UniProtKB-UniRule"/>
</dbReference>
<dbReference type="GO" id="GO:0006402">
    <property type="term" value="P:mRNA catabolic process"/>
    <property type="evidence" value="ECO:0007669"/>
    <property type="project" value="UniProtKB-UniRule"/>
</dbReference>
<dbReference type="CDD" id="cd00077">
    <property type="entry name" value="HDc"/>
    <property type="match status" value="1"/>
</dbReference>
<dbReference type="CDD" id="cd22431">
    <property type="entry name" value="KH-I_RNaseY"/>
    <property type="match status" value="1"/>
</dbReference>
<dbReference type="FunFam" id="1.10.3210.10:FF:000022">
    <property type="entry name" value="Ribonuclease Y"/>
    <property type="match status" value="1"/>
</dbReference>
<dbReference type="FunFam" id="3.30.1370.10:FF:000006">
    <property type="entry name" value="Ribonuclease Y"/>
    <property type="match status" value="1"/>
</dbReference>
<dbReference type="Gene3D" id="1.10.3210.10">
    <property type="entry name" value="Hypothetical protein af1432"/>
    <property type="match status" value="1"/>
</dbReference>
<dbReference type="Gene3D" id="3.30.1370.10">
    <property type="entry name" value="K Homology domain, type 1"/>
    <property type="match status" value="1"/>
</dbReference>
<dbReference type="HAMAP" id="MF_00335">
    <property type="entry name" value="RNase_Y"/>
    <property type="match status" value="1"/>
</dbReference>
<dbReference type="InterPro" id="IPR003607">
    <property type="entry name" value="HD/PDEase_dom"/>
</dbReference>
<dbReference type="InterPro" id="IPR006674">
    <property type="entry name" value="HD_domain"/>
</dbReference>
<dbReference type="InterPro" id="IPR006675">
    <property type="entry name" value="HDIG_dom"/>
</dbReference>
<dbReference type="InterPro" id="IPR004087">
    <property type="entry name" value="KH_dom"/>
</dbReference>
<dbReference type="InterPro" id="IPR004088">
    <property type="entry name" value="KH_dom_type_1"/>
</dbReference>
<dbReference type="InterPro" id="IPR036612">
    <property type="entry name" value="KH_dom_type_1_sf"/>
</dbReference>
<dbReference type="InterPro" id="IPR017705">
    <property type="entry name" value="Ribonuclease_Y"/>
</dbReference>
<dbReference type="InterPro" id="IPR022711">
    <property type="entry name" value="RNase_Y_N"/>
</dbReference>
<dbReference type="NCBIfam" id="TIGR00277">
    <property type="entry name" value="HDIG"/>
    <property type="match status" value="1"/>
</dbReference>
<dbReference type="NCBIfam" id="TIGR03319">
    <property type="entry name" value="RNase_Y"/>
    <property type="match status" value="1"/>
</dbReference>
<dbReference type="PANTHER" id="PTHR12826">
    <property type="entry name" value="RIBONUCLEASE Y"/>
    <property type="match status" value="1"/>
</dbReference>
<dbReference type="PANTHER" id="PTHR12826:SF15">
    <property type="entry name" value="RIBONUCLEASE Y"/>
    <property type="match status" value="1"/>
</dbReference>
<dbReference type="Pfam" id="PF01966">
    <property type="entry name" value="HD"/>
    <property type="match status" value="1"/>
</dbReference>
<dbReference type="Pfam" id="PF00013">
    <property type="entry name" value="KH_1"/>
    <property type="match status" value="1"/>
</dbReference>
<dbReference type="Pfam" id="PF12072">
    <property type="entry name" value="RNase_Y_N"/>
    <property type="match status" value="1"/>
</dbReference>
<dbReference type="SMART" id="SM00471">
    <property type="entry name" value="HDc"/>
    <property type="match status" value="1"/>
</dbReference>
<dbReference type="SMART" id="SM00322">
    <property type="entry name" value="KH"/>
    <property type="match status" value="1"/>
</dbReference>
<dbReference type="SUPFAM" id="SSF54791">
    <property type="entry name" value="Eukaryotic type KH-domain (KH-domain type I)"/>
    <property type="match status" value="1"/>
</dbReference>
<dbReference type="SUPFAM" id="SSF109604">
    <property type="entry name" value="HD-domain/PDEase-like"/>
    <property type="match status" value="1"/>
</dbReference>
<dbReference type="PROSITE" id="PS51831">
    <property type="entry name" value="HD"/>
    <property type="match status" value="1"/>
</dbReference>
<dbReference type="PROSITE" id="PS50084">
    <property type="entry name" value="KH_TYPE_1"/>
    <property type="match status" value="1"/>
</dbReference>
<organism>
    <name type="scientific">Caldanaerobacter subterraneus subsp. tengcongensis (strain DSM 15242 / JCM 11007 / NBRC 100824 / MB4)</name>
    <name type="common">Thermoanaerobacter tengcongensis</name>
    <dbReference type="NCBI Taxonomy" id="273068"/>
    <lineage>
        <taxon>Bacteria</taxon>
        <taxon>Bacillati</taxon>
        <taxon>Bacillota</taxon>
        <taxon>Clostridia</taxon>
        <taxon>Thermoanaerobacterales</taxon>
        <taxon>Thermoanaerobacteraceae</taxon>
        <taxon>Caldanaerobacter</taxon>
    </lineage>
</organism>
<protein>
    <recommendedName>
        <fullName evidence="1">Ribonuclease Y</fullName>
        <shortName evidence="1">RNase Y</shortName>
        <ecNumber evidence="1">3.1.-.-</ecNumber>
    </recommendedName>
</protein>
<gene>
    <name evidence="1" type="primary">rny</name>
    <name type="ordered locus">TTE1372</name>
</gene>
<reference key="1">
    <citation type="journal article" date="2002" name="Genome Res.">
        <title>A complete sequence of the T. tengcongensis genome.</title>
        <authorList>
            <person name="Bao Q."/>
            <person name="Tian Y."/>
            <person name="Li W."/>
            <person name="Xu Z."/>
            <person name="Xuan Z."/>
            <person name="Hu S."/>
            <person name="Dong W."/>
            <person name="Yang J."/>
            <person name="Chen Y."/>
            <person name="Xue Y."/>
            <person name="Xu Y."/>
            <person name="Lai X."/>
            <person name="Huang L."/>
            <person name="Dong X."/>
            <person name="Ma Y."/>
            <person name="Ling L."/>
            <person name="Tan H."/>
            <person name="Chen R."/>
            <person name="Wang J."/>
            <person name="Yu J."/>
            <person name="Yang H."/>
        </authorList>
    </citation>
    <scope>NUCLEOTIDE SEQUENCE [LARGE SCALE GENOMIC DNA]</scope>
    <source>
        <strain>DSM 15242 / JCM 11007 / NBRC 100824 / MB4</strain>
    </source>
</reference>
<sequence>MNHLLRRCRSISYVGLIITALIAILIGFLAGFLARKVIAESKIKSAENLARTILESAKKDAENKKREALLEAKEEIHRLRSDFEKEVRDRRGELQRLEKRLLQKEEILEKRAESLEQKEILLEQKQKEIQQLEEQITLLHKKQLEELERISGLTQEEAKSILLESVQKEIQHDMAVMIKEMENKAKEEADRRAREIVGLAIQRCAADHAAETTVSVVTLPNDEMKGRIIGREGRNIRTIETLTGIDLIIDDTPEAVVISGFDPIRREIARIALEKLIEDGRIHPARIEEMVEKAKKEVDNMIIKAGEEAAFEVGVHGLHPELIKLLGRLKFRTSYGQNVLKHSIEVAHLAGLMAYELGADASIAKRAGLLHDIGKAVDHEVEGPHVMIGAELAKRYHESDAVVHAIMAHHNDVEPQTIEAVLVQAADAISAARPGARREALEAYIKRLDKLEQIANSFEGVEKAYAIQAGREIRIMVKPEAISDDELVILARNISKKIEEEVEYPGQIKVTVIRETVAIDYAK</sequence>
<accession>Q8RA57</accession>